<proteinExistence type="inferred from homology"/>
<accession>P0A0S3</accession>
<accession>O25964</accession>
<gene>
    <name type="primary">fliQ</name>
    <name type="ordered locus">HP_1419</name>
</gene>
<protein>
    <recommendedName>
        <fullName>Flagellar biosynthetic protein FliQ</fullName>
    </recommendedName>
</protein>
<comment type="function">
    <text>Role in flagellar biosynthesis.</text>
</comment>
<comment type="subcellular location">
    <subcellularLocation>
        <location evidence="3">Cell membrane</location>
        <topology evidence="3">Multi-pass membrane protein</topology>
    </subcellularLocation>
    <subcellularLocation>
        <location evidence="1">Bacterial flagellum basal body</location>
    </subcellularLocation>
</comment>
<comment type="similarity">
    <text evidence="3">Belongs to the FliQ/MopD/SpaQ family.</text>
</comment>
<keyword id="KW-0975">Bacterial flagellum</keyword>
<keyword id="KW-1003">Cell membrane</keyword>
<keyword id="KW-0472">Membrane</keyword>
<keyword id="KW-1185">Reference proteome</keyword>
<keyword id="KW-0812">Transmembrane</keyword>
<keyword id="KW-1133">Transmembrane helix</keyword>
<dbReference type="EMBL" id="U75584">
    <property type="protein sequence ID" value="AAB93499.1"/>
    <property type="molecule type" value="Genomic_DNA"/>
</dbReference>
<dbReference type="EMBL" id="AE000511">
    <property type="protein sequence ID" value="AAD08461.1"/>
    <property type="molecule type" value="Genomic_DNA"/>
</dbReference>
<dbReference type="PIR" id="C64697">
    <property type="entry name" value="C64697"/>
</dbReference>
<dbReference type="RefSeq" id="NP_208210.1">
    <property type="nucleotide sequence ID" value="NC_000915.1"/>
</dbReference>
<dbReference type="RefSeq" id="WP_000445741.1">
    <property type="nucleotide sequence ID" value="NC_018939.1"/>
</dbReference>
<dbReference type="SMR" id="P0A0S3"/>
<dbReference type="FunCoup" id="P0A0S3">
    <property type="interactions" value="60"/>
</dbReference>
<dbReference type="STRING" id="85962.HP_1419"/>
<dbReference type="PaxDb" id="85962-C694_07340"/>
<dbReference type="EnsemblBacteria" id="AAD08461">
    <property type="protein sequence ID" value="AAD08461"/>
    <property type="gene ID" value="HP_1419"/>
</dbReference>
<dbReference type="GeneID" id="93236380"/>
<dbReference type="KEGG" id="heo:C694_07340"/>
<dbReference type="KEGG" id="hpy:HP_1419"/>
<dbReference type="PATRIC" id="fig|85962.47.peg.1523"/>
<dbReference type="eggNOG" id="COG1987">
    <property type="taxonomic scope" value="Bacteria"/>
</dbReference>
<dbReference type="InParanoid" id="P0A0S3"/>
<dbReference type="OrthoDB" id="9806440at2"/>
<dbReference type="PhylomeDB" id="P0A0S3"/>
<dbReference type="Proteomes" id="UP000000429">
    <property type="component" value="Chromosome"/>
</dbReference>
<dbReference type="GO" id="GO:0009425">
    <property type="term" value="C:bacterial-type flagellum basal body"/>
    <property type="evidence" value="ECO:0007669"/>
    <property type="project" value="UniProtKB-SubCell"/>
</dbReference>
<dbReference type="GO" id="GO:0005886">
    <property type="term" value="C:plasma membrane"/>
    <property type="evidence" value="ECO:0007669"/>
    <property type="project" value="UniProtKB-SubCell"/>
</dbReference>
<dbReference type="GO" id="GO:0044780">
    <property type="term" value="P:bacterial-type flagellum assembly"/>
    <property type="evidence" value="ECO:0000318"/>
    <property type="project" value="GO_Central"/>
</dbReference>
<dbReference type="GO" id="GO:0009306">
    <property type="term" value="P:protein secretion"/>
    <property type="evidence" value="ECO:0007669"/>
    <property type="project" value="InterPro"/>
</dbReference>
<dbReference type="InterPro" id="IPR002191">
    <property type="entry name" value="Bac_export_3"/>
</dbReference>
<dbReference type="InterPro" id="IPR006305">
    <property type="entry name" value="FliQ"/>
</dbReference>
<dbReference type="NCBIfam" id="TIGR01402">
    <property type="entry name" value="fliQ"/>
    <property type="match status" value="1"/>
</dbReference>
<dbReference type="PANTHER" id="PTHR34040">
    <property type="entry name" value="FLAGELLAR BIOSYNTHETIC PROTEIN FLIQ"/>
    <property type="match status" value="1"/>
</dbReference>
<dbReference type="PANTHER" id="PTHR34040:SF2">
    <property type="entry name" value="FLAGELLAR BIOSYNTHETIC PROTEIN FLIQ"/>
    <property type="match status" value="1"/>
</dbReference>
<dbReference type="Pfam" id="PF01313">
    <property type="entry name" value="Bac_export_3"/>
    <property type="match status" value="1"/>
</dbReference>
<dbReference type="PIRSF" id="PIRSF004669">
    <property type="entry name" value="FliQ"/>
    <property type="match status" value="1"/>
</dbReference>
<dbReference type="PRINTS" id="PR00952">
    <property type="entry name" value="TYPE3IMQPROT"/>
</dbReference>
<organism>
    <name type="scientific">Helicobacter pylori (strain ATCC 700392 / 26695)</name>
    <name type="common">Campylobacter pylori</name>
    <dbReference type="NCBI Taxonomy" id="85962"/>
    <lineage>
        <taxon>Bacteria</taxon>
        <taxon>Pseudomonadati</taxon>
        <taxon>Campylobacterota</taxon>
        <taxon>Epsilonproteobacteria</taxon>
        <taxon>Campylobacterales</taxon>
        <taxon>Helicobacteraceae</taxon>
        <taxon>Helicobacter</taxon>
    </lineage>
</organism>
<sequence length="88" mass="9762">MESQLMKLAIETYKITLMISLPVLLAGLVVGLLVSIFQATTQINEMTLSFVPKILAVIGVLILTMPWMTNMLLDYTKTLIKLIPKIIG</sequence>
<feature type="chain" id="PRO_0000129100" description="Flagellar biosynthetic protein FliQ">
    <location>
        <begin position="1"/>
        <end position="88"/>
    </location>
</feature>
<feature type="transmembrane region" description="Helical" evidence="2">
    <location>
        <begin position="17"/>
        <end position="37"/>
    </location>
</feature>
<feature type="transmembrane region" description="Helical" evidence="2">
    <location>
        <begin position="48"/>
        <end position="68"/>
    </location>
</feature>
<evidence type="ECO:0000250" key="1"/>
<evidence type="ECO:0000255" key="2"/>
<evidence type="ECO:0000305" key="3"/>
<reference key="1">
    <citation type="journal article" date="1999" name="Infect. Immun.">
        <title>Molecular characterization of a flagellar export locus of Helicobacter pylori.</title>
        <authorList>
            <person name="Porwollik S."/>
            <person name="Noonan B."/>
            <person name="O'Toole P.W."/>
        </authorList>
    </citation>
    <scope>NUCLEOTIDE SEQUENCE [GENOMIC DNA]</scope>
    <source>
        <strain>DSM 4867 / CCUG 17874 / NCTC 11638</strain>
    </source>
</reference>
<reference key="2">
    <citation type="journal article" date="1997" name="Nature">
        <title>The complete genome sequence of the gastric pathogen Helicobacter pylori.</title>
        <authorList>
            <person name="Tomb J.-F."/>
            <person name="White O."/>
            <person name="Kerlavage A.R."/>
            <person name="Clayton R.A."/>
            <person name="Sutton G.G."/>
            <person name="Fleischmann R.D."/>
            <person name="Ketchum K.A."/>
            <person name="Klenk H.-P."/>
            <person name="Gill S.R."/>
            <person name="Dougherty B.A."/>
            <person name="Nelson K.E."/>
            <person name="Quackenbush J."/>
            <person name="Zhou L."/>
            <person name="Kirkness E.F."/>
            <person name="Peterson S.N."/>
            <person name="Loftus B.J."/>
            <person name="Richardson D.L."/>
            <person name="Dodson R.J."/>
            <person name="Khalak H.G."/>
            <person name="Glodek A."/>
            <person name="McKenney K."/>
            <person name="FitzGerald L.M."/>
            <person name="Lee N."/>
            <person name="Adams M.D."/>
            <person name="Hickey E.K."/>
            <person name="Berg D.E."/>
            <person name="Gocayne J.D."/>
            <person name="Utterback T.R."/>
            <person name="Peterson J.D."/>
            <person name="Kelley J.M."/>
            <person name="Cotton M.D."/>
            <person name="Weidman J.F."/>
            <person name="Fujii C."/>
            <person name="Bowman C."/>
            <person name="Watthey L."/>
            <person name="Wallin E."/>
            <person name="Hayes W.S."/>
            <person name="Borodovsky M."/>
            <person name="Karp P.D."/>
            <person name="Smith H.O."/>
            <person name="Fraser C.M."/>
            <person name="Venter J.C."/>
        </authorList>
    </citation>
    <scope>NUCLEOTIDE SEQUENCE [LARGE SCALE GENOMIC DNA]</scope>
    <source>
        <strain>ATCC 700392 / 26695</strain>
    </source>
</reference>
<name>FLIQ_HELPY</name>